<protein>
    <recommendedName>
        <fullName>Putative lipoprotein LprH</fullName>
    </recommendedName>
</protein>
<accession>P9WK42</accession>
<accession>L0T6T2</accession>
<accession>P65316</accession>
<accession>P71687</accession>
<proteinExistence type="inferred from homology"/>
<evidence type="ECO:0000255" key="1"/>
<evidence type="ECO:0000255" key="2">
    <source>
        <dbReference type="PROSITE-ProRule" id="PRU00303"/>
    </source>
</evidence>
<comment type="subcellular location">
    <subcellularLocation>
        <location evidence="2">Cell membrane</location>
        <topology evidence="2">Lipid-anchor</topology>
    </subcellularLocation>
</comment>
<dbReference type="EMBL" id="AE000516">
    <property type="protein sequence ID" value="AAK45726.1"/>
    <property type="molecule type" value="Genomic_DNA"/>
</dbReference>
<dbReference type="PIR" id="G70902">
    <property type="entry name" value="G70902"/>
</dbReference>
<dbReference type="RefSeq" id="WP_003407343.1">
    <property type="nucleotide sequence ID" value="NZ_KK341227.1"/>
</dbReference>
<dbReference type="KEGG" id="mtc:MT1461"/>
<dbReference type="PATRIC" id="fig|83331.31.peg.1570"/>
<dbReference type="HOGENOM" id="CLU_1413823_0_0_11"/>
<dbReference type="Proteomes" id="UP000001020">
    <property type="component" value="Chromosome"/>
</dbReference>
<dbReference type="GO" id="GO:0005886">
    <property type="term" value="C:plasma membrane"/>
    <property type="evidence" value="ECO:0007669"/>
    <property type="project" value="UniProtKB-SubCell"/>
</dbReference>
<dbReference type="PROSITE" id="PS51257">
    <property type="entry name" value="PROKAR_LIPOPROTEIN"/>
    <property type="match status" value="1"/>
</dbReference>
<feature type="signal peptide" evidence="2">
    <location>
        <begin position="1"/>
        <end position="27"/>
    </location>
</feature>
<feature type="chain" id="PRO_0000427719" description="Putative lipoprotein LprH">
    <location>
        <begin position="28"/>
        <end position="228"/>
    </location>
</feature>
<feature type="transmembrane region" description="Helical" evidence="1">
    <location>
        <begin position="191"/>
        <end position="211"/>
    </location>
</feature>
<feature type="lipid moiety-binding region" description="N-palmitoyl cysteine" evidence="2">
    <location>
        <position position="28"/>
    </location>
</feature>
<feature type="lipid moiety-binding region" description="S-diacylglycerol cysteine" evidence="2">
    <location>
        <position position="28"/>
    </location>
</feature>
<organism>
    <name type="scientific">Mycobacterium tuberculosis (strain CDC 1551 / Oshkosh)</name>
    <dbReference type="NCBI Taxonomy" id="83331"/>
    <lineage>
        <taxon>Bacteria</taxon>
        <taxon>Bacillati</taxon>
        <taxon>Actinomycetota</taxon>
        <taxon>Actinomycetes</taxon>
        <taxon>Mycobacteriales</taxon>
        <taxon>Mycobacteriaceae</taxon>
        <taxon>Mycobacterium</taxon>
        <taxon>Mycobacterium tuberculosis complex</taxon>
    </lineage>
</organism>
<reference key="1">
    <citation type="journal article" date="2002" name="J. Bacteriol.">
        <title>Whole-genome comparison of Mycobacterium tuberculosis clinical and laboratory strains.</title>
        <authorList>
            <person name="Fleischmann R.D."/>
            <person name="Alland D."/>
            <person name="Eisen J.A."/>
            <person name="Carpenter L."/>
            <person name="White O."/>
            <person name="Peterson J.D."/>
            <person name="DeBoy R.T."/>
            <person name="Dodson R.J."/>
            <person name="Gwinn M.L."/>
            <person name="Haft D.H."/>
            <person name="Hickey E.K."/>
            <person name="Kolonay J.F."/>
            <person name="Nelson W.C."/>
            <person name="Umayam L.A."/>
            <person name="Ermolaeva M.D."/>
            <person name="Salzberg S.L."/>
            <person name="Delcher A."/>
            <person name="Utterback T.R."/>
            <person name="Weidman J.F."/>
            <person name="Khouri H.M."/>
            <person name="Gill J."/>
            <person name="Mikula A."/>
            <person name="Bishai W."/>
            <person name="Jacobs W.R. Jr."/>
            <person name="Venter J.C."/>
            <person name="Fraser C.M."/>
        </authorList>
    </citation>
    <scope>NUCLEOTIDE SEQUENCE [LARGE SCALE GENOMIC DNA]</scope>
    <source>
        <strain>CDC 1551 / Oshkosh</strain>
    </source>
</reference>
<gene>
    <name type="primary">lprH</name>
    <name type="ordered locus">MT1461</name>
</gene>
<name>LPRH_MYCTO</name>
<sequence>MACLGRPGCRGWAGASLVLVVVLALAACTESVAGRAMRATDRSSGLPTSAKPARARDLLLQDGDRAPFGQVTQSRVGDSYFTSAVPPECSAALLFKGSPLRPDGSSDHAEAAYNVTGPLPYAESVDVYTNVLNVHDVVWNGFRDVSHCRGDAVGVSRAGRSTPMRLRYFATLSDGVLVWTMSNPRWTCDYGLAVVPHAVLVLSACGFKPGFPMAEWASKRRAQLDSQV</sequence>
<keyword id="KW-1003">Cell membrane</keyword>
<keyword id="KW-0449">Lipoprotein</keyword>
<keyword id="KW-0472">Membrane</keyword>
<keyword id="KW-0564">Palmitate</keyword>
<keyword id="KW-1185">Reference proteome</keyword>
<keyword id="KW-0732">Signal</keyword>
<keyword id="KW-0812">Transmembrane</keyword>
<keyword id="KW-1133">Transmembrane helix</keyword>